<proteinExistence type="predicted"/>
<accession>Q44581</accession>
<protein>
    <recommendedName>
        <fullName>Nickel-cobalt-cadmium resistance protein NccY</fullName>
    </recommendedName>
</protein>
<keyword id="KW-0104">Cadmium</keyword>
<keyword id="KW-0105">Cadmium resistance</keyword>
<keyword id="KW-0170">Cobalt</keyword>
<keyword id="KW-0533">Nickel</keyword>
<keyword id="KW-0614">Plasmid</keyword>
<geneLocation type="plasmid">
    <name>pTOM9</name>
</geneLocation>
<feature type="chain" id="PRO_0000096758" description="Nickel-cobalt-cadmium resistance protein NccY">
    <location>
        <begin position="1"/>
        <end position="95"/>
    </location>
</feature>
<evidence type="ECO:0000305" key="1"/>
<name>NCCY_ALCXX</name>
<comment type="function">
    <text>Component of the NCC cation-efflux system that confers resistance to nickel, cobalt and cadmium. May be involved in the regulation of NCC.</text>
</comment>
<comment type="similarity">
    <text evidence="1">To A.eutrophus CnrY.</text>
</comment>
<sequence>MENIDEWLVQAKKVTYEASREPGLGRIQQRLSREPSQMVLTARHDILRAVCCAALASLVAFTAIDRIAVGLYQKQQPTWVAAPSAASPFGLLIGK</sequence>
<organism>
    <name type="scientific">Alcaligenes xylosoxydans xylosoxydans</name>
    <name type="common">Achromobacter xylosoxidans</name>
    <dbReference type="NCBI Taxonomy" id="85698"/>
    <lineage>
        <taxon>Bacteria</taxon>
        <taxon>Pseudomonadati</taxon>
        <taxon>Pseudomonadota</taxon>
        <taxon>Betaproteobacteria</taxon>
        <taxon>Burkholderiales</taxon>
        <taxon>Alcaligenaceae</taxon>
        <taxon>Achromobacter</taxon>
    </lineage>
</organism>
<gene>
    <name type="primary">nccY</name>
</gene>
<dbReference type="EMBL" id="L31363">
    <property type="protein sequence ID" value="AAA65101.1"/>
    <property type="molecule type" value="Genomic_DNA"/>
</dbReference>
<dbReference type="PIR" id="I39575">
    <property type="entry name" value="I39575"/>
</dbReference>
<dbReference type="SMR" id="Q44581"/>
<dbReference type="GO" id="GO:0046686">
    <property type="term" value="P:response to cadmium ion"/>
    <property type="evidence" value="ECO:0007669"/>
    <property type="project" value="UniProtKB-KW"/>
</dbReference>
<dbReference type="InterPro" id="IPR035230">
    <property type="entry name" value="CnrY"/>
</dbReference>
<dbReference type="NCBIfam" id="NF033790">
    <property type="entry name" value="CnrY_NccY_antiS"/>
    <property type="match status" value="1"/>
</dbReference>
<dbReference type="Pfam" id="PF17524">
    <property type="entry name" value="CnrY"/>
    <property type="match status" value="1"/>
</dbReference>
<reference key="1">
    <citation type="journal article" date="1994" name="J. Bacteriol.">
        <title>Combined nickel-cobalt-cadmium resistance encoded by the ncc locus of Alcaligenes xylosoxidans 31A.</title>
        <authorList>
            <person name="Schmidt T."/>
            <person name="Schlegel H.G."/>
        </authorList>
    </citation>
    <scope>NUCLEOTIDE SEQUENCE [GENOMIC DNA]</scope>
    <source>
        <strain>31A</strain>
    </source>
</reference>